<keyword id="KW-0963">Cytoplasm</keyword>
<keyword id="KW-0369">Histidine metabolism</keyword>
<keyword id="KW-0456">Lyase</keyword>
<keyword id="KW-0520">NAD</keyword>
<keyword id="KW-0346">Stress response</keyword>
<sequence length="565" mass="61334">MTSTTPKSPAAFTRHRDGEIRAARGTQLTAKSWMTEAPLRMLMNNLDPQVAENPTELVVYGGIGRAARNWECYDKIVESLTNLNDDETLLVQSGKPVGVFKTHSNAPRVLIANSNLVPHWATWEHFNELDAKGLAMYGQMTAGSWINIGSQGIVQGTYETFVEAGRQHYNGSLKGKWVLTAGLGGMGGAQPLAATLAGACSLNIECQQSRIDFRLATRYVDEQALDLDDALVRIAKYTAEGKAISIALCGNAAELLPEMVRRGVRPDMVTDQTSAHDPLNGYLPKGWTWEQYRDRAVTDPAAVVKAAKASMGEHVEAMLAFQKAGIPTFDYGNNIRQMAKEVGVENAFDFPGFVPAYIRPLFCRGVGPFRWVALSGDAEDIYKTDAKVKELIADDAHLHNWLDMARERISFQGLPARICWVGLGQRAKLGLAFNEMVRSGELKAPIVIGRDHLDSGSVSSPNRETESMKDGSDAVSDWPLLNALLNTASGATWVSLHHGGGVGMGFSQHSGMVIVCDGTDEAAERIARVLHNDPATGVMRHADAGYDIAIDCANEQGLNLPMING</sequence>
<reference key="1">
    <citation type="journal article" date="2002" name="Appl. Environ. Microbiol.">
        <title>Cloning, sequencing, and expression of the cold-inducible hutU gene from the antarctic psychrotrophic bacterium Pseudomonas syringae.</title>
        <authorList>
            <person name="Janiyani K.L."/>
            <person name="Ray M.K."/>
        </authorList>
    </citation>
    <scope>NUCLEOTIDE SEQUENCE [GENOMIC DNA]</scope>
    <source>
        <strain>Lz4W</strain>
    </source>
</reference>
<accession>Q9AGU4</accession>
<dbReference type="EC" id="4.2.1.49" evidence="1"/>
<dbReference type="EMBL" id="AF326719">
    <property type="protein sequence ID" value="AAK15634.1"/>
    <property type="molecule type" value="Genomic_DNA"/>
</dbReference>
<dbReference type="SMR" id="Q9AGU4"/>
<dbReference type="eggNOG" id="COG2987">
    <property type="taxonomic scope" value="Bacteria"/>
</dbReference>
<dbReference type="UniPathway" id="UPA00379">
    <property type="reaction ID" value="UER00550"/>
</dbReference>
<dbReference type="GO" id="GO:0005737">
    <property type="term" value="C:cytoplasm"/>
    <property type="evidence" value="ECO:0007669"/>
    <property type="project" value="UniProtKB-SubCell"/>
</dbReference>
<dbReference type="GO" id="GO:0016153">
    <property type="term" value="F:urocanate hydratase activity"/>
    <property type="evidence" value="ECO:0007669"/>
    <property type="project" value="UniProtKB-UniRule"/>
</dbReference>
<dbReference type="GO" id="GO:0019556">
    <property type="term" value="P:L-histidine catabolic process to glutamate and formamide"/>
    <property type="evidence" value="ECO:0007669"/>
    <property type="project" value="UniProtKB-UniPathway"/>
</dbReference>
<dbReference type="GO" id="GO:0019557">
    <property type="term" value="P:L-histidine catabolic process to glutamate and formate"/>
    <property type="evidence" value="ECO:0007669"/>
    <property type="project" value="UniProtKB-UniPathway"/>
</dbReference>
<dbReference type="FunFam" id="3.40.50.10730:FF:000001">
    <property type="entry name" value="Urocanate hydratase"/>
    <property type="match status" value="1"/>
</dbReference>
<dbReference type="Gene3D" id="3.40.50.10730">
    <property type="entry name" value="Urocanase like domains"/>
    <property type="match status" value="1"/>
</dbReference>
<dbReference type="Gene3D" id="3.40.1770.10">
    <property type="entry name" value="Urocanase superfamily"/>
    <property type="match status" value="1"/>
</dbReference>
<dbReference type="HAMAP" id="MF_00577">
    <property type="entry name" value="HutU"/>
    <property type="match status" value="1"/>
</dbReference>
<dbReference type="InterPro" id="IPR055351">
    <property type="entry name" value="Urocanase"/>
</dbReference>
<dbReference type="InterPro" id="IPR023637">
    <property type="entry name" value="Urocanase-like"/>
</dbReference>
<dbReference type="InterPro" id="IPR035401">
    <property type="entry name" value="Urocanase_C"/>
</dbReference>
<dbReference type="InterPro" id="IPR038364">
    <property type="entry name" value="Urocanase_central_sf"/>
</dbReference>
<dbReference type="InterPro" id="IPR023636">
    <property type="entry name" value="Urocanase_CS"/>
</dbReference>
<dbReference type="InterPro" id="IPR035400">
    <property type="entry name" value="Urocanase_N"/>
</dbReference>
<dbReference type="InterPro" id="IPR035085">
    <property type="entry name" value="Urocanase_Rossmann-like"/>
</dbReference>
<dbReference type="InterPro" id="IPR036190">
    <property type="entry name" value="Urocanase_sf"/>
</dbReference>
<dbReference type="NCBIfam" id="TIGR01228">
    <property type="entry name" value="hutU"/>
    <property type="match status" value="1"/>
</dbReference>
<dbReference type="NCBIfam" id="NF003820">
    <property type="entry name" value="PRK05414.1"/>
    <property type="match status" value="1"/>
</dbReference>
<dbReference type="PANTHER" id="PTHR12216">
    <property type="entry name" value="UROCANATE HYDRATASE"/>
    <property type="match status" value="1"/>
</dbReference>
<dbReference type="PANTHER" id="PTHR12216:SF4">
    <property type="entry name" value="UROCANATE HYDRATASE"/>
    <property type="match status" value="1"/>
</dbReference>
<dbReference type="Pfam" id="PF01175">
    <property type="entry name" value="Urocanase"/>
    <property type="match status" value="1"/>
</dbReference>
<dbReference type="Pfam" id="PF17392">
    <property type="entry name" value="Urocanase_C"/>
    <property type="match status" value="1"/>
</dbReference>
<dbReference type="Pfam" id="PF17391">
    <property type="entry name" value="Urocanase_N"/>
    <property type="match status" value="1"/>
</dbReference>
<dbReference type="PIRSF" id="PIRSF001423">
    <property type="entry name" value="Urocanate_hydrat"/>
    <property type="match status" value="1"/>
</dbReference>
<dbReference type="SUPFAM" id="SSF111326">
    <property type="entry name" value="Urocanase"/>
    <property type="match status" value="1"/>
</dbReference>
<dbReference type="PROSITE" id="PS01233">
    <property type="entry name" value="UROCANASE"/>
    <property type="match status" value="1"/>
</dbReference>
<name>HUTU_PSESX</name>
<feature type="chain" id="PRO_0000207347" description="Urocanate hydratase">
    <location>
        <begin position="1"/>
        <end position="565"/>
    </location>
</feature>
<feature type="region of interest" description="Disordered" evidence="2">
    <location>
        <begin position="453"/>
        <end position="472"/>
    </location>
</feature>
<feature type="compositionally biased region" description="Basic and acidic residues" evidence="2">
    <location>
        <begin position="463"/>
        <end position="472"/>
    </location>
</feature>
<feature type="active site" evidence="1">
    <location>
        <position position="419"/>
    </location>
</feature>
<feature type="binding site" evidence="1">
    <location>
        <begin position="61"/>
        <end position="62"/>
    </location>
    <ligand>
        <name>NAD(+)</name>
        <dbReference type="ChEBI" id="CHEBI:57540"/>
    </ligand>
</feature>
<feature type="binding site" evidence="1">
    <location>
        <position position="139"/>
    </location>
    <ligand>
        <name>NAD(+)</name>
        <dbReference type="ChEBI" id="CHEBI:57540"/>
    </ligand>
</feature>
<feature type="binding site" evidence="1">
    <location>
        <begin position="185"/>
        <end position="187"/>
    </location>
    <ligand>
        <name>NAD(+)</name>
        <dbReference type="ChEBI" id="CHEBI:57540"/>
    </ligand>
</feature>
<feature type="binding site" evidence="1">
    <location>
        <position position="205"/>
    </location>
    <ligand>
        <name>NAD(+)</name>
        <dbReference type="ChEBI" id="CHEBI:57540"/>
    </ligand>
</feature>
<feature type="binding site" evidence="1">
    <location>
        <position position="210"/>
    </location>
    <ligand>
        <name>NAD(+)</name>
        <dbReference type="ChEBI" id="CHEBI:57540"/>
    </ligand>
</feature>
<feature type="binding site" evidence="1">
    <location>
        <begin position="251"/>
        <end position="252"/>
    </location>
    <ligand>
        <name>NAD(+)</name>
        <dbReference type="ChEBI" id="CHEBI:57540"/>
    </ligand>
</feature>
<feature type="binding site" evidence="1">
    <location>
        <begin position="272"/>
        <end position="276"/>
    </location>
    <ligand>
        <name>NAD(+)</name>
        <dbReference type="ChEBI" id="CHEBI:57540"/>
    </ligand>
</feature>
<feature type="binding site" evidence="1">
    <location>
        <begin position="282"/>
        <end position="283"/>
    </location>
    <ligand>
        <name>NAD(+)</name>
        <dbReference type="ChEBI" id="CHEBI:57540"/>
    </ligand>
</feature>
<feature type="binding site" evidence="1">
    <location>
        <position position="331"/>
    </location>
    <ligand>
        <name>NAD(+)</name>
        <dbReference type="ChEBI" id="CHEBI:57540"/>
    </ligand>
</feature>
<feature type="binding site" evidence="1">
    <location>
        <position position="501"/>
    </location>
    <ligand>
        <name>NAD(+)</name>
        <dbReference type="ChEBI" id="CHEBI:57540"/>
    </ligand>
</feature>
<proteinExistence type="evidence at transcript level"/>
<evidence type="ECO:0000255" key="1">
    <source>
        <dbReference type="HAMAP-Rule" id="MF_00577"/>
    </source>
</evidence>
<evidence type="ECO:0000256" key="2">
    <source>
        <dbReference type="SAM" id="MobiDB-lite"/>
    </source>
</evidence>
<evidence type="ECO:0000305" key="3"/>
<organism>
    <name type="scientific">Pseudomonas syringae</name>
    <dbReference type="NCBI Taxonomy" id="317"/>
    <lineage>
        <taxon>Bacteria</taxon>
        <taxon>Pseudomonadati</taxon>
        <taxon>Pseudomonadota</taxon>
        <taxon>Gammaproteobacteria</taxon>
        <taxon>Pseudomonadales</taxon>
        <taxon>Pseudomonadaceae</taxon>
        <taxon>Pseudomonas</taxon>
    </lineage>
</organism>
<comment type="function">
    <text evidence="1">Catalyzes the conversion of urocanate to 4-imidazolone-5-propionate.</text>
</comment>
<comment type="catalytic activity">
    <reaction evidence="1">
        <text>4-imidazolone-5-propanoate = trans-urocanate + H2O</text>
        <dbReference type="Rhea" id="RHEA:13101"/>
        <dbReference type="ChEBI" id="CHEBI:15377"/>
        <dbReference type="ChEBI" id="CHEBI:17771"/>
        <dbReference type="ChEBI" id="CHEBI:77893"/>
        <dbReference type="EC" id="4.2.1.49"/>
    </reaction>
</comment>
<comment type="cofactor">
    <cofactor evidence="1">
        <name>NAD(+)</name>
        <dbReference type="ChEBI" id="CHEBI:57540"/>
    </cofactor>
    <text evidence="1">Binds 1 NAD(+) per subunit.</text>
</comment>
<comment type="pathway">
    <text evidence="1">Amino-acid degradation; L-histidine degradation into L-glutamate; N-formimidoyl-L-glutamate from L-histidine: step 2/3.</text>
</comment>
<comment type="subcellular location">
    <subcellularLocation>
        <location evidence="1">Cytoplasm</location>
    </subcellularLocation>
</comment>
<comment type="induction">
    <text>By cold.</text>
</comment>
<comment type="similarity">
    <text evidence="1 3">Belongs to the urocanase family.</text>
</comment>
<protein>
    <recommendedName>
        <fullName evidence="1">Urocanate hydratase</fullName>
        <shortName evidence="1">Urocanase</shortName>
        <ecNumber evidence="1">4.2.1.49</ecNumber>
    </recommendedName>
    <alternativeName>
        <fullName evidence="1">Imidazolonepropionate hydrolase</fullName>
    </alternativeName>
</protein>
<gene>
    <name evidence="1" type="primary">hutU</name>
</gene>